<evidence type="ECO:0000255" key="1">
    <source>
        <dbReference type="HAMAP-Rule" id="MF_00362"/>
    </source>
</evidence>
<evidence type="ECO:0000305" key="2"/>
<organism>
    <name type="scientific">Salmonella newport (strain SL254)</name>
    <dbReference type="NCBI Taxonomy" id="423368"/>
    <lineage>
        <taxon>Bacteria</taxon>
        <taxon>Pseudomonadati</taxon>
        <taxon>Pseudomonadota</taxon>
        <taxon>Gammaproteobacteria</taxon>
        <taxon>Enterobacterales</taxon>
        <taxon>Enterobacteriaceae</taxon>
        <taxon>Salmonella</taxon>
    </lineage>
</organism>
<accession>B4T0Y7</accession>
<dbReference type="EMBL" id="CP001113">
    <property type="protein sequence ID" value="ACF63581.1"/>
    <property type="molecule type" value="Genomic_DNA"/>
</dbReference>
<dbReference type="RefSeq" id="WP_001207203.1">
    <property type="nucleotide sequence ID" value="NZ_CCMR01000001.1"/>
</dbReference>
<dbReference type="GeneID" id="93756505"/>
<dbReference type="KEGG" id="see:SNSL254_A4483"/>
<dbReference type="HOGENOM" id="CLU_092227_0_2_6"/>
<dbReference type="Proteomes" id="UP000008824">
    <property type="component" value="Chromosome"/>
</dbReference>
<dbReference type="GO" id="GO:0015934">
    <property type="term" value="C:large ribosomal subunit"/>
    <property type="evidence" value="ECO:0007669"/>
    <property type="project" value="InterPro"/>
</dbReference>
<dbReference type="GO" id="GO:0070180">
    <property type="term" value="F:large ribosomal subunit rRNA binding"/>
    <property type="evidence" value="ECO:0007669"/>
    <property type="project" value="UniProtKB-UniRule"/>
</dbReference>
<dbReference type="GO" id="GO:0003735">
    <property type="term" value="F:structural constituent of ribosome"/>
    <property type="evidence" value="ECO:0007669"/>
    <property type="project" value="InterPro"/>
</dbReference>
<dbReference type="GO" id="GO:0006412">
    <property type="term" value="P:translation"/>
    <property type="evidence" value="ECO:0007669"/>
    <property type="project" value="UniProtKB-UniRule"/>
</dbReference>
<dbReference type="CDD" id="cd05797">
    <property type="entry name" value="Ribosomal_L10"/>
    <property type="match status" value="1"/>
</dbReference>
<dbReference type="FunFam" id="3.30.70.1730:FF:000001">
    <property type="entry name" value="50S ribosomal protein L10"/>
    <property type="match status" value="1"/>
</dbReference>
<dbReference type="Gene3D" id="3.30.70.1730">
    <property type="match status" value="1"/>
</dbReference>
<dbReference type="Gene3D" id="6.10.250.2350">
    <property type="match status" value="1"/>
</dbReference>
<dbReference type="HAMAP" id="MF_00362">
    <property type="entry name" value="Ribosomal_uL10"/>
    <property type="match status" value="1"/>
</dbReference>
<dbReference type="InterPro" id="IPR001790">
    <property type="entry name" value="Ribosomal_uL10"/>
</dbReference>
<dbReference type="InterPro" id="IPR043141">
    <property type="entry name" value="Ribosomal_uL10-like_sf"/>
</dbReference>
<dbReference type="InterPro" id="IPR022973">
    <property type="entry name" value="Ribosomal_uL10_bac"/>
</dbReference>
<dbReference type="InterPro" id="IPR047865">
    <property type="entry name" value="Ribosomal_uL10_bac_type"/>
</dbReference>
<dbReference type="InterPro" id="IPR002363">
    <property type="entry name" value="Ribosomal_uL10_CS_bac"/>
</dbReference>
<dbReference type="NCBIfam" id="NF000955">
    <property type="entry name" value="PRK00099.1-1"/>
    <property type="match status" value="1"/>
</dbReference>
<dbReference type="PANTHER" id="PTHR11560">
    <property type="entry name" value="39S RIBOSOMAL PROTEIN L10, MITOCHONDRIAL"/>
    <property type="match status" value="1"/>
</dbReference>
<dbReference type="Pfam" id="PF00466">
    <property type="entry name" value="Ribosomal_L10"/>
    <property type="match status" value="1"/>
</dbReference>
<dbReference type="SUPFAM" id="SSF160369">
    <property type="entry name" value="Ribosomal protein L10-like"/>
    <property type="match status" value="1"/>
</dbReference>
<dbReference type="PROSITE" id="PS01109">
    <property type="entry name" value="RIBOSOMAL_L10"/>
    <property type="match status" value="1"/>
</dbReference>
<feature type="chain" id="PRO_1000121011" description="Large ribosomal subunit protein uL10">
    <location>
        <begin position="1"/>
        <end position="165"/>
    </location>
</feature>
<protein>
    <recommendedName>
        <fullName evidence="1">Large ribosomal subunit protein uL10</fullName>
    </recommendedName>
    <alternativeName>
        <fullName evidence="2">50S ribosomal protein L10</fullName>
    </alternativeName>
</protein>
<reference key="1">
    <citation type="journal article" date="2011" name="J. Bacteriol.">
        <title>Comparative genomics of 28 Salmonella enterica isolates: evidence for CRISPR-mediated adaptive sublineage evolution.</title>
        <authorList>
            <person name="Fricke W.F."/>
            <person name="Mammel M.K."/>
            <person name="McDermott P.F."/>
            <person name="Tartera C."/>
            <person name="White D.G."/>
            <person name="Leclerc J.E."/>
            <person name="Ravel J."/>
            <person name="Cebula T.A."/>
        </authorList>
    </citation>
    <scope>NUCLEOTIDE SEQUENCE [LARGE SCALE GENOMIC DNA]</scope>
    <source>
        <strain>SL254</strain>
    </source>
</reference>
<name>RL10_SALNS</name>
<comment type="function">
    <text evidence="1">Forms part of the ribosomal stalk, playing a central role in the interaction of the ribosome with GTP-bound translation factors.</text>
</comment>
<comment type="subunit">
    <text evidence="1">Part of the ribosomal stalk of the 50S ribosomal subunit. The N-terminus interacts with L11 and the large rRNA to form the base of the stalk. The C-terminus forms an elongated spine to which L12 dimers bind in a sequential fashion forming a multimeric L10(L12)X complex.</text>
</comment>
<comment type="similarity">
    <text evidence="1">Belongs to the universal ribosomal protein uL10 family.</text>
</comment>
<keyword id="KW-0687">Ribonucleoprotein</keyword>
<keyword id="KW-0689">Ribosomal protein</keyword>
<keyword id="KW-0694">RNA-binding</keyword>
<keyword id="KW-0699">rRNA-binding</keyword>
<sequence>MALNLQDKQAIVAEVSEVAKGALSAVVADSRGVTVDKMTELRKAGREAGVYMRVVRNTLLRRVVEGTQFECLKDTFVGPTLIAYSMEHPGAAARLFKEFAKANAKFEVKAAAFEGELIPASQIDRLATLPTYEEAIARLMATMKEASAGKLVRTLAAVRDAKEAA</sequence>
<gene>
    <name evidence="1" type="primary">rplJ</name>
    <name type="ordered locus">SNSL254_A4483</name>
</gene>
<proteinExistence type="inferred from homology"/>